<reference key="1">
    <citation type="submission" date="2006-11" db="EMBL/GenBank/DDBJ databases">
        <title>Identification and characterization of a new conjugation/ type IVA secretion system (trb/tra) of L. pneumophila Corby localized on a mobile genomic island.</title>
        <authorList>
            <person name="Gloeckner G."/>
            <person name="Albert-Weissenberger C."/>
            <person name="Weinmann E."/>
            <person name="Jacobi S."/>
            <person name="Schunder E."/>
            <person name="Steinert M."/>
            <person name="Buchrieser C."/>
            <person name="Hacker J."/>
            <person name="Heuner K."/>
        </authorList>
    </citation>
    <scope>NUCLEOTIDE SEQUENCE [LARGE SCALE GENOMIC DNA]</scope>
    <source>
        <strain>Corby</strain>
    </source>
</reference>
<gene>
    <name evidence="1" type="primary">nhaA</name>
    <name type="ordered locus">LPC_2099</name>
</gene>
<dbReference type="EMBL" id="CP000675">
    <property type="protein sequence ID" value="ABQ56029.1"/>
    <property type="molecule type" value="Genomic_DNA"/>
</dbReference>
<dbReference type="RefSeq" id="WP_011947297.1">
    <property type="nucleotide sequence ID" value="NC_009494.2"/>
</dbReference>
<dbReference type="SMR" id="A5IF79"/>
<dbReference type="KEGG" id="lpc:LPC_2099"/>
<dbReference type="HOGENOM" id="CLU_015803_1_0_6"/>
<dbReference type="GO" id="GO:0005886">
    <property type="term" value="C:plasma membrane"/>
    <property type="evidence" value="ECO:0007669"/>
    <property type="project" value="UniProtKB-SubCell"/>
</dbReference>
<dbReference type="GO" id="GO:0015385">
    <property type="term" value="F:sodium:proton antiporter activity"/>
    <property type="evidence" value="ECO:0007669"/>
    <property type="project" value="TreeGrafter"/>
</dbReference>
<dbReference type="GO" id="GO:0006885">
    <property type="term" value="P:regulation of pH"/>
    <property type="evidence" value="ECO:0007669"/>
    <property type="project" value="InterPro"/>
</dbReference>
<dbReference type="Gene3D" id="1.20.1530.10">
    <property type="entry name" value="Na+/H+ antiporter like domain"/>
    <property type="match status" value="1"/>
</dbReference>
<dbReference type="HAMAP" id="MF_01844">
    <property type="entry name" value="NhaA"/>
    <property type="match status" value="1"/>
</dbReference>
<dbReference type="InterPro" id="IPR023171">
    <property type="entry name" value="Na/H_antiporter_dom_sf"/>
</dbReference>
<dbReference type="InterPro" id="IPR004670">
    <property type="entry name" value="NhaA"/>
</dbReference>
<dbReference type="NCBIfam" id="TIGR00773">
    <property type="entry name" value="NhaA"/>
    <property type="match status" value="1"/>
</dbReference>
<dbReference type="NCBIfam" id="NF007111">
    <property type="entry name" value="PRK09560.1"/>
    <property type="match status" value="1"/>
</dbReference>
<dbReference type="NCBIfam" id="NF007112">
    <property type="entry name" value="PRK09561.1"/>
    <property type="match status" value="1"/>
</dbReference>
<dbReference type="NCBIfam" id="NF011427">
    <property type="entry name" value="PRK14854.1"/>
    <property type="match status" value="1"/>
</dbReference>
<dbReference type="PANTHER" id="PTHR30341:SF0">
    <property type="entry name" value="NA(+)_H(+) ANTIPORTER NHAA"/>
    <property type="match status" value="1"/>
</dbReference>
<dbReference type="PANTHER" id="PTHR30341">
    <property type="entry name" value="SODIUM ION/PROTON ANTIPORTER NHAA-RELATED"/>
    <property type="match status" value="1"/>
</dbReference>
<dbReference type="Pfam" id="PF06965">
    <property type="entry name" value="Na_H_antiport_1"/>
    <property type="match status" value="1"/>
</dbReference>
<name>NHAA_LEGPC</name>
<organism>
    <name type="scientific">Legionella pneumophila (strain Corby)</name>
    <dbReference type="NCBI Taxonomy" id="400673"/>
    <lineage>
        <taxon>Bacteria</taxon>
        <taxon>Pseudomonadati</taxon>
        <taxon>Pseudomonadota</taxon>
        <taxon>Gammaproteobacteria</taxon>
        <taxon>Legionellales</taxon>
        <taxon>Legionellaceae</taxon>
        <taxon>Legionella</taxon>
    </lineage>
</organism>
<keyword id="KW-0050">Antiport</keyword>
<keyword id="KW-0997">Cell inner membrane</keyword>
<keyword id="KW-1003">Cell membrane</keyword>
<keyword id="KW-0406">Ion transport</keyword>
<keyword id="KW-0472">Membrane</keyword>
<keyword id="KW-0915">Sodium</keyword>
<keyword id="KW-0739">Sodium transport</keyword>
<keyword id="KW-0812">Transmembrane</keyword>
<keyword id="KW-1133">Transmembrane helix</keyword>
<keyword id="KW-0813">Transport</keyword>
<sequence>MNKSDSFYNLETIGGILLFIAAVLAIITANSPYRVGYEYFLSINGSVSVGNMSITKPLLLWINDGLMAIYFLLIGLEIKREVNRGILSDKTNLLVPALTALAGLLFPALIFIFFNAHHPVYLKGWAIPTATDIAFTLGIVSLLGSRVPFSLKILLTAIAIFDDIAAIVIIALFYTEQLSLLSLSLALVFTLILIGLNYFKCRRISVFMLFGVALWIAVLKSGVHATLAGIVIAMTIPDEGKESMLTRLEDGLHHWVVFLILPLFAFANAGVSFVGLDASMLTHPVVLGIGLGLFLGKQLGIFLSLGYFVQFKKFLKADKVNLAQVYGIALICGVGFTMSLFIGSLAYQNYDLSLMPMVKIGVVFGSFIAGLTGFLVLKMTSLKR</sequence>
<protein>
    <recommendedName>
        <fullName evidence="1">Na(+)/H(+) antiporter NhaA</fullName>
    </recommendedName>
    <alternativeName>
        <fullName evidence="1">Sodium/proton antiporter NhaA</fullName>
    </alternativeName>
</protein>
<proteinExistence type="inferred from homology"/>
<accession>A5IF79</accession>
<comment type="function">
    <text evidence="1">Na(+)/H(+) antiporter that extrudes sodium in exchange for external protons.</text>
</comment>
<comment type="catalytic activity">
    <reaction evidence="1">
        <text>Na(+)(in) + 2 H(+)(out) = Na(+)(out) + 2 H(+)(in)</text>
        <dbReference type="Rhea" id="RHEA:29251"/>
        <dbReference type="ChEBI" id="CHEBI:15378"/>
        <dbReference type="ChEBI" id="CHEBI:29101"/>
    </reaction>
    <physiologicalReaction direction="left-to-right" evidence="1">
        <dbReference type="Rhea" id="RHEA:29252"/>
    </physiologicalReaction>
</comment>
<comment type="subcellular location">
    <subcellularLocation>
        <location evidence="1">Cell inner membrane</location>
        <topology evidence="1">Multi-pass membrane protein</topology>
    </subcellularLocation>
</comment>
<comment type="similarity">
    <text evidence="1">Belongs to the NhaA Na(+)/H(+) (TC 2.A.33) antiporter family.</text>
</comment>
<feature type="chain" id="PRO_0000334329" description="Na(+)/H(+) antiporter NhaA">
    <location>
        <begin position="1"/>
        <end position="384"/>
    </location>
</feature>
<feature type="transmembrane region" description="Helical" evidence="1">
    <location>
        <begin position="7"/>
        <end position="27"/>
    </location>
</feature>
<feature type="transmembrane region" description="Helical" evidence="1">
    <location>
        <begin position="58"/>
        <end position="78"/>
    </location>
</feature>
<feature type="transmembrane region" description="Helical" evidence="1">
    <location>
        <begin position="94"/>
        <end position="114"/>
    </location>
</feature>
<feature type="transmembrane region" description="Helical" evidence="1">
    <location>
        <begin position="124"/>
        <end position="144"/>
    </location>
</feature>
<feature type="transmembrane region" description="Helical" evidence="1">
    <location>
        <begin position="153"/>
        <end position="173"/>
    </location>
</feature>
<feature type="transmembrane region" description="Helical" evidence="1">
    <location>
        <begin position="179"/>
        <end position="199"/>
    </location>
</feature>
<feature type="transmembrane region" description="Helical" evidence="1">
    <location>
        <begin position="204"/>
        <end position="224"/>
    </location>
</feature>
<feature type="transmembrane region" description="Helical" evidence="1">
    <location>
        <begin position="256"/>
        <end position="276"/>
    </location>
</feature>
<feature type="transmembrane region" description="Helical" evidence="1">
    <location>
        <begin position="285"/>
        <end position="305"/>
    </location>
</feature>
<feature type="transmembrane region" description="Helical" evidence="1">
    <location>
        <begin position="325"/>
        <end position="345"/>
    </location>
</feature>
<feature type="transmembrane region" description="Helical" evidence="1">
    <location>
        <begin position="357"/>
        <end position="377"/>
    </location>
</feature>
<evidence type="ECO:0000255" key="1">
    <source>
        <dbReference type="HAMAP-Rule" id="MF_01844"/>
    </source>
</evidence>